<sequence length="261" mass="29244">MASVLEKTKSKKIVFPTKKELSEAMATYTANLSAKFCKERGYFTVVLSGGDLISWLSELLEPKYQESIEWSKWHIFWVDERVVPLDHEDSNYKLAFDGFLSKVPIPIANIYPIDKDCAALGDAKSAALLYEECLKRLVNRNIIRTYKSSGFPQFDLQLLGMGPDGHMASLFPGHYQIKEKANLVTYITDSPKPPPKRITFTLPVINCASYNLMAVCDEAQADAVAKVFNHNFDLPAAWLTADVEAIWFLDQAAASKIPKGL</sequence>
<keyword id="KW-0963">Cytoplasm</keyword>
<keyword id="KW-0378">Hydrolase</keyword>
<keyword id="KW-1185">Reference proteome</keyword>
<proteinExistence type="evidence at transcript level"/>
<name>6PGL4_ARATH</name>
<feature type="chain" id="PRO_0000288671" description="Probable 6-phosphogluconolactonase 4">
    <location>
        <begin position="1"/>
        <end position="261"/>
    </location>
</feature>
<gene>
    <name evidence="3" type="primary">PGL4</name>
    <name evidence="5" type="ordered locus">At5g24410</name>
    <name evidence="6" type="ORF">K16H17.12</name>
</gene>
<protein>
    <recommendedName>
        <fullName evidence="4">Probable 6-phosphogluconolactonase 4</fullName>
        <shortName evidence="4">6PGL4</shortName>
        <ecNumber evidence="1">3.1.1.31</ecNumber>
    </recommendedName>
</protein>
<accession>Q9FIN1</accession>
<comment type="function">
    <text evidence="1">Catalyzes the hydrolysis of 6-phosphogluconolactone to 6-phosphogluconate.</text>
</comment>
<comment type="catalytic activity">
    <reaction evidence="1">
        <text>6-phospho-D-glucono-1,5-lactone + H2O = 6-phospho-D-gluconate + H(+)</text>
        <dbReference type="Rhea" id="RHEA:12556"/>
        <dbReference type="ChEBI" id="CHEBI:15377"/>
        <dbReference type="ChEBI" id="CHEBI:15378"/>
        <dbReference type="ChEBI" id="CHEBI:57955"/>
        <dbReference type="ChEBI" id="CHEBI:58759"/>
        <dbReference type="EC" id="3.1.1.31"/>
    </reaction>
</comment>
<comment type="pathway">
    <text evidence="4">Carbohydrate degradation; pentose phosphate pathway; D-ribulose 5-phosphate from D-glucose 6-phosphate (oxidative stage): step 2/3.</text>
</comment>
<comment type="subcellular location">
    <subcellularLocation>
        <location evidence="2">Cytoplasm</location>
        <location evidence="2">Cytosol</location>
    </subcellularLocation>
</comment>
<comment type="similarity">
    <text evidence="4">Belongs to the glucosamine/galactosamine-6-phosphate isomerase family. 6-phosphogluconolactonase subfamily.</text>
</comment>
<evidence type="ECO:0000250" key="1">
    <source>
        <dbReference type="UniProtKB" id="Q84WW2"/>
    </source>
</evidence>
<evidence type="ECO:0000269" key="2">
    <source>
    </source>
</evidence>
<evidence type="ECO:0000303" key="3">
    <source>
    </source>
</evidence>
<evidence type="ECO:0000305" key="4"/>
<evidence type="ECO:0000312" key="5">
    <source>
        <dbReference type="Araport" id="AT5G24410"/>
    </source>
</evidence>
<evidence type="ECO:0000312" key="6">
    <source>
        <dbReference type="EMBL" id="BAB11234.1"/>
    </source>
</evidence>
<dbReference type="EC" id="3.1.1.31" evidence="1"/>
<dbReference type="EMBL" id="AB016884">
    <property type="protein sequence ID" value="BAB11234.1"/>
    <property type="molecule type" value="Genomic_DNA"/>
</dbReference>
<dbReference type="EMBL" id="CP002688">
    <property type="protein sequence ID" value="AED93308.1"/>
    <property type="molecule type" value="Genomic_DNA"/>
</dbReference>
<dbReference type="EMBL" id="BT010945">
    <property type="protein sequence ID" value="AAR24723.1"/>
    <property type="molecule type" value="mRNA"/>
</dbReference>
<dbReference type="EMBL" id="BT012199">
    <property type="protein sequence ID" value="AAS76686.1"/>
    <property type="molecule type" value="mRNA"/>
</dbReference>
<dbReference type="RefSeq" id="NP_197829.1">
    <property type="nucleotide sequence ID" value="NM_122349.4"/>
</dbReference>
<dbReference type="SMR" id="Q9FIN1"/>
<dbReference type="FunCoup" id="Q9FIN1">
    <property type="interactions" value="3315"/>
</dbReference>
<dbReference type="STRING" id="3702.Q9FIN1"/>
<dbReference type="iPTMnet" id="Q9FIN1"/>
<dbReference type="PaxDb" id="3702-AT5G24410.1"/>
<dbReference type="ProteomicsDB" id="245148"/>
<dbReference type="EnsemblPlants" id="AT5G24410.1">
    <property type="protein sequence ID" value="AT5G24410.1"/>
    <property type="gene ID" value="AT5G24410"/>
</dbReference>
<dbReference type="GeneID" id="832512"/>
<dbReference type="Gramene" id="AT5G24410.1">
    <property type="protein sequence ID" value="AT5G24410.1"/>
    <property type="gene ID" value="AT5G24410"/>
</dbReference>
<dbReference type="KEGG" id="ath:AT5G24410"/>
<dbReference type="Araport" id="AT5G24410"/>
<dbReference type="TAIR" id="AT5G24410">
    <property type="gene designation" value="PGL4"/>
</dbReference>
<dbReference type="eggNOG" id="KOG3147">
    <property type="taxonomic scope" value="Eukaryota"/>
</dbReference>
<dbReference type="HOGENOM" id="CLU_053947_0_0_1"/>
<dbReference type="InParanoid" id="Q9FIN1"/>
<dbReference type="OMA" id="MAVCDEA"/>
<dbReference type="OrthoDB" id="432544at2759"/>
<dbReference type="PhylomeDB" id="Q9FIN1"/>
<dbReference type="BioCyc" id="ARA:AT5G24410-MONOMER"/>
<dbReference type="BRENDA" id="3.1.1.31">
    <property type="organism ID" value="399"/>
</dbReference>
<dbReference type="UniPathway" id="UPA00115">
    <property type="reaction ID" value="UER00409"/>
</dbReference>
<dbReference type="PRO" id="PR:Q9FIN1"/>
<dbReference type="Proteomes" id="UP000006548">
    <property type="component" value="Chromosome 5"/>
</dbReference>
<dbReference type="ExpressionAtlas" id="Q9FIN1">
    <property type="expression patterns" value="baseline and differential"/>
</dbReference>
<dbReference type="GO" id="GO:0005829">
    <property type="term" value="C:cytosol"/>
    <property type="evidence" value="ECO:0000314"/>
    <property type="project" value="TAIR"/>
</dbReference>
<dbReference type="GO" id="GO:0031982">
    <property type="term" value="C:vesicle"/>
    <property type="evidence" value="ECO:0000314"/>
    <property type="project" value="TAIR"/>
</dbReference>
<dbReference type="GO" id="GO:0017057">
    <property type="term" value="F:6-phosphogluconolactonase activity"/>
    <property type="evidence" value="ECO:0007669"/>
    <property type="project" value="UniProtKB-EC"/>
</dbReference>
<dbReference type="GO" id="GO:0005975">
    <property type="term" value="P:carbohydrate metabolic process"/>
    <property type="evidence" value="ECO:0007669"/>
    <property type="project" value="InterPro"/>
</dbReference>
<dbReference type="GO" id="GO:0006098">
    <property type="term" value="P:pentose-phosphate shunt"/>
    <property type="evidence" value="ECO:0007669"/>
    <property type="project" value="UniProtKB-UniPathway"/>
</dbReference>
<dbReference type="CDD" id="cd01400">
    <property type="entry name" value="6PGL"/>
    <property type="match status" value="1"/>
</dbReference>
<dbReference type="FunFam" id="3.40.50.1360:FF:000009">
    <property type="entry name" value="Probable 6-phosphogluconolactonase"/>
    <property type="match status" value="1"/>
</dbReference>
<dbReference type="Gene3D" id="3.40.50.1360">
    <property type="match status" value="1"/>
</dbReference>
<dbReference type="InterPro" id="IPR005900">
    <property type="entry name" value="6-phosphogluconolactonase_DevB"/>
</dbReference>
<dbReference type="InterPro" id="IPR006148">
    <property type="entry name" value="Glc/Gal-6P_isomerase"/>
</dbReference>
<dbReference type="InterPro" id="IPR037171">
    <property type="entry name" value="NagB/RpiA_transferase-like"/>
</dbReference>
<dbReference type="InterPro" id="IPR039104">
    <property type="entry name" value="PGLS"/>
</dbReference>
<dbReference type="NCBIfam" id="TIGR01198">
    <property type="entry name" value="pgl"/>
    <property type="match status" value="1"/>
</dbReference>
<dbReference type="PANTHER" id="PTHR11054">
    <property type="entry name" value="6-PHOSPHOGLUCONOLACTONASE"/>
    <property type="match status" value="1"/>
</dbReference>
<dbReference type="PANTHER" id="PTHR11054:SF11">
    <property type="entry name" value="6-PHOSPHOGLUCONOLACTONASE 4-RELATED"/>
    <property type="match status" value="1"/>
</dbReference>
<dbReference type="Pfam" id="PF01182">
    <property type="entry name" value="Glucosamine_iso"/>
    <property type="match status" value="1"/>
</dbReference>
<dbReference type="SUPFAM" id="SSF100950">
    <property type="entry name" value="NagB/RpiA/CoA transferase-like"/>
    <property type="match status" value="1"/>
</dbReference>
<organism>
    <name type="scientific">Arabidopsis thaliana</name>
    <name type="common">Mouse-ear cress</name>
    <dbReference type="NCBI Taxonomy" id="3702"/>
    <lineage>
        <taxon>Eukaryota</taxon>
        <taxon>Viridiplantae</taxon>
        <taxon>Streptophyta</taxon>
        <taxon>Embryophyta</taxon>
        <taxon>Tracheophyta</taxon>
        <taxon>Spermatophyta</taxon>
        <taxon>Magnoliopsida</taxon>
        <taxon>eudicotyledons</taxon>
        <taxon>Gunneridae</taxon>
        <taxon>Pentapetalae</taxon>
        <taxon>rosids</taxon>
        <taxon>malvids</taxon>
        <taxon>Brassicales</taxon>
        <taxon>Brassicaceae</taxon>
        <taxon>Camelineae</taxon>
        <taxon>Arabidopsis</taxon>
    </lineage>
</organism>
<reference key="1">
    <citation type="journal article" date="1998" name="DNA Res.">
        <title>Structural analysis of Arabidopsis thaliana chromosome 5. VIII. Sequence features of the regions of 1,081,958 bp covered by seventeen physically assigned P1 and TAC clones.</title>
        <authorList>
            <person name="Asamizu E."/>
            <person name="Sato S."/>
            <person name="Kaneko T."/>
            <person name="Nakamura Y."/>
            <person name="Kotani H."/>
            <person name="Miyajima N."/>
            <person name="Tabata S."/>
        </authorList>
    </citation>
    <scope>NUCLEOTIDE SEQUENCE [LARGE SCALE GENOMIC DNA]</scope>
    <source>
        <strain>cv. Columbia</strain>
    </source>
</reference>
<reference key="2">
    <citation type="journal article" date="2017" name="Plant J.">
        <title>Araport11: a complete reannotation of the Arabidopsis thaliana reference genome.</title>
        <authorList>
            <person name="Cheng C.Y."/>
            <person name="Krishnakumar V."/>
            <person name="Chan A.P."/>
            <person name="Thibaud-Nissen F."/>
            <person name="Schobel S."/>
            <person name="Town C.D."/>
        </authorList>
    </citation>
    <scope>GENOME REANNOTATION</scope>
    <source>
        <strain>cv. Columbia</strain>
    </source>
</reference>
<reference key="3">
    <citation type="submission" date="2004-03" db="EMBL/GenBank/DDBJ databases">
        <title>Arabidopsis ORF clones.</title>
        <authorList>
            <person name="Cheuk R.F."/>
            <person name="Chen H."/>
            <person name="Kim C.J."/>
            <person name="Shinn P."/>
            <person name="Ecker J.R."/>
        </authorList>
    </citation>
    <scope>NUCLEOTIDE SEQUENCE [LARGE SCALE MRNA]</scope>
    <source>
        <strain>cv. Columbia</strain>
    </source>
</reference>
<reference key="4">
    <citation type="journal article" date="2009" name="Plant Cell Physiol.">
        <title>Characterization of Arabidopsis 6-phosphogluconolactonase T-DNA insertion mutants reveals an essential role for the oxidative section of the plastidic pentose phosphate pathway in plant growth and development.</title>
        <authorList>
            <person name="Xiong Y."/>
            <person name="DeFraia C."/>
            <person name="Williams D."/>
            <person name="Zhang X."/>
            <person name="Mou Z."/>
        </authorList>
    </citation>
    <scope>GENE FAMILY</scope>
    <scope>NOMENCLATURE</scope>
</reference>
<reference key="5">
    <citation type="journal article" date="2014" name="Mol. Plant">
        <title>Dual-targeting of Arabidopsis 6-phosphogluconolactonase 3 (PGL3) to chloroplasts and peroxisomes involves interaction with Trx m2 in the cytosol.</title>
        <authorList>
            <person name="Hoelscher C."/>
            <person name="Meyer T."/>
            <person name="von Schaewen A."/>
        </authorList>
    </citation>
    <scope>SUBCELLULAR LOCATION</scope>
</reference>